<evidence type="ECO:0000305" key="1"/>
<comment type="subcellular location">
    <subcellularLocation>
        <location evidence="1">Cell membrane</location>
    </subcellularLocation>
</comment>
<comment type="similarity">
    <text evidence="1">To H.influenzae HI_1119.</text>
</comment>
<gene>
    <name type="primary">lapB</name>
</gene>
<proteinExistence type="predicted"/>
<reference key="1">
    <citation type="journal article" date="1993" name="Infect. Immun.">
        <title>Expression of the Pasteurella haemolytica leukotoxin is inhibited by a locus that encodes an ATP-binding cassette homolog.</title>
        <authorList>
            <person name="Highlander S.K."/>
            <person name="Wickersham E.A."/>
            <person name="Garza O."/>
            <person name="Weinstock G.M."/>
        </authorList>
    </citation>
    <scope>NUCLEOTIDE SEQUENCE [GENOMIC DNA]</scope>
    <source>
        <strain>Serotype A1 / PH101</strain>
    </source>
</reference>
<reference key="2">
    <citation type="journal article" date="1993" name="Infect. Immun.">
        <authorList>
            <person name="Highlander S.K."/>
            <person name="Wickersham E.A."/>
            <person name="Garza O."/>
            <person name="Weinstock G.M."/>
        </authorList>
    </citation>
    <scope>ERRATUM OF PUBMED:8359916</scope>
</reference>
<name>LAPB_MANHA</name>
<dbReference type="EMBL" id="M59210">
    <property type="protein sequence ID" value="AAA25535.1"/>
    <property type="molecule type" value="Genomic_DNA"/>
</dbReference>
<dbReference type="PIR" id="S27610">
    <property type="entry name" value="S27610"/>
</dbReference>
<dbReference type="STRING" id="75985.WC39_13355"/>
<dbReference type="GO" id="GO:0005886">
    <property type="term" value="C:plasma membrane"/>
    <property type="evidence" value="ECO:0007669"/>
    <property type="project" value="UniProtKB-SubCell"/>
</dbReference>
<dbReference type="GO" id="GO:0006974">
    <property type="term" value="P:DNA damage response"/>
    <property type="evidence" value="ECO:0007669"/>
    <property type="project" value="TreeGrafter"/>
</dbReference>
<dbReference type="InterPro" id="IPR007488">
    <property type="entry name" value="DUF535"/>
</dbReference>
<dbReference type="PANTHER" id="PTHR38785">
    <property type="entry name" value="HOMOLOG OF VIRK"/>
    <property type="match status" value="1"/>
</dbReference>
<dbReference type="PANTHER" id="PTHR38785:SF1">
    <property type="entry name" value="HOMOLOG OF VIRK"/>
    <property type="match status" value="1"/>
</dbReference>
<dbReference type="Pfam" id="PF04393">
    <property type="entry name" value="DUF535"/>
    <property type="match status" value="1"/>
</dbReference>
<protein>
    <recommendedName>
        <fullName>Membrane protein LapB</fullName>
    </recommendedName>
</protein>
<keyword id="KW-1003">Cell membrane</keyword>
<keyword id="KW-0472">Membrane</keyword>
<organism>
    <name type="scientific">Mannheimia haemolytica</name>
    <name type="common">Pasteurella haemolytica</name>
    <dbReference type="NCBI Taxonomy" id="75985"/>
    <lineage>
        <taxon>Bacteria</taxon>
        <taxon>Pseudomonadati</taxon>
        <taxon>Pseudomonadota</taxon>
        <taxon>Gammaproteobacteria</taxon>
        <taxon>Pasteurellales</taxon>
        <taxon>Pasteurellaceae</taxon>
        <taxon>Mannheimia</taxon>
    </lineage>
</organism>
<feature type="chain" id="PRO_0000084356" description="Membrane protein LapB">
    <location>
        <begin position="1"/>
        <end position="225"/>
    </location>
</feature>
<accession>P32181</accession>
<sequence length="225" mass="26110">MKNLYKWPAAQSLYPNQGKKSYAGKRFRYRLRSWLHHSKIKQFEQFVTQNPQLIPLLNARPNYSYPVAHRFLDKRFSAKQRLQKITDNLLFLPQKLAHLPPLWEQAVNFGEIIADFELWLNINEHQPMEGFWALELRHRPTNQLVYLLTFGKLDEALLIAVIQGPNFEGSKELVKQLTKSCHGLRPAYLMVETMKALTAVLGYQSLLGIPQKYQNKSAGCKVSAM</sequence>